<dbReference type="EMBL" id="AF119337">
    <property type="protein sequence ID" value="AAD41774.1"/>
    <property type="molecule type" value="mRNA"/>
</dbReference>
<dbReference type="SMR" id="Q9XT47"/>
<dbReference type="GlyCosmos" id="Q9XT47">
    <property type="glycosylation" value="1 site, No reported glycans"/>
</dbReference>
<dbReference type="HOGENOM" id="CLU_096531_0_0_1"/>
<dbReference type="GO" id="GO:0005615">
    <property type="term" value="C:extracellular space"/>
    <property type="evidence" value="ECO:0007669"/>
    <property type="project" value="UniProtKB-KW"/>
</dbReference>
<dbReference type="GO" id="GO:0016020">
    <property type="term" value="C:membrane"/>
    <property type="evidence" value="ECO:0007669"/>
    <property type="project" value="UniProtKB-SubCell"/>
</dbReference>
<dbReference type="GO" id="GO:0005125">
    <property type="term" value="F:cytokine activity"/>
    <property type="evidence" value="ECO:0007669"/>
    <property type="project" value="UniProtKB-KW"/>
</dbReference>
<dbReference type="GO" id="GO:0005164">
    <property type="term" value="F:tumor necrosis factor receptor binding"/>
    <property type="evidence" value="ECO:0007669"/>
    <property type="project" value="InterPro"/>
</dbReference>
<dbReference type="GO" id="GO:0006955">
    <property type="term" value="P:immune response"/>
    <property type="evidence" value="ECO:0007669"/>
    <property type="project" value="InterPro"/>
</dbReference>
<dbReference type="CDD" id="cd00184">
    <property type="entry name" value="TNF"/>
    <property type="match status" value="1"/>
</dbReference>
<dbReference type="FunFam" id="2.60.120.40:FF:000030">
    <property type="entry name" value="Lymphotoxin-beta"/>
    <property type="match status" value="1"/>
</dbReference>
<dbReference type="Gene3D" id="2.60.120.40">
    <property type="match status" value="1"/>
</dbReference>
<dbReference type="InterPro" id="IPR006053">
    <property type="entry name" value="TNF"/>
</dbReference>
<dbReference type="InterPro" id="IPR002961">
    <property type="entry name" value="TNF_C"/>
</dbReference>
<dbReference type="InterPro" id="IPR021184">
    <property type="entry name" value="TNF_CS"/>
</dbReference>
<dbReference type="InterPro" id="IPR006052">
    <property type="entry name" value="TNF_dom"/>
</dbReference>
<dbReference type="InterPro" id="IPR008983">
    <property type="entry name" value="Tumour_necrosis_fac-like_dom"/>
</dbReference>
<dbReference type="PANTHER" id="PTHR11471:SF29">
    <property type="entry name" value="LYMPHOTOXIN-BETA"/>
    <property type="match status" value="1"/>
</dbReference>
<dbReference type="PANTHER" id="PTHR11471">
    <property type="entry name" value="TUMOR NECROSIS FACTOR FAMILY MEMBER"/>
    <property type="match status" value="1"/>
</dbReference>
<dbReference type="Pfam" id="PF00229">
    <property type="entry name" value="TNF"/>
    <property type="match status" value="1"/>
</dbReference>
<dbReference type="PRINTS" id="PR01234">
    <property type="entry name" value="TNECROSISFCT"/>
</dbReference>
<dbReference type="PRINTS" id="PR01237">
    <property type="entry name" value="TNFC"/>
</dbReference>
<dbReference type="SMART" id="SM00207">
    <property type="entry name" value="TNF"/>
    <property type="match status" value="1"/>
</dbReference>
<dbReference type="SUPFAM" id="SSF49842">
    <property type="entry name" value="TNF-like"/>
    <property type="match status" value="1"/>
</dbReference>
<dbReference type="PROSITE" id="PS00251">
    <property type="entry name" value="THD_1"/>
    <property type="match status" value="1"/>
</dbReference>
<dbReference type="PROSITE" id="PS50049">
    <property type="entry name" value="THD_2"/>
    <property type="match status" value="1"/>
</dbReference>
<comment type="function">
    <text>Cytokine that binds to LTBR/TNFRSF3. May play a specific role in immune response regulation. Provides the membrane anchor for the attachment of the heterotrimeric complex to the cell surface.</text>
</comment>
<comment type="subunit">
    <text evidence="1">Heterotrimer of either two LTB and one LTA subunits or (less prevalent) two LTA and one LTB subunits.</text>
</comment>
<comment type="subcellular location">
    <subcellularLocation>
        <location evidence="4">Membrane</location>
        <topology evidence="4">Single-pass type II membrane protein</topology>
    </subcellularLocation>
</comment>
<comment type="similarity">
    <text evidence="4">Belongs to the tumor necrosis factor family.</text>
</comment>
<organism>
    <name type="scientific">Notamacropus eugenii</name>
    <name type="common">Tammar wallaby</name>
    <name type="synonym">Macropus eugenii</name>
    <dbReference type="NCBI Taxonomy" id="9315"/>
    <lineage>
        <taxon>Eukaryota</taxon>
        <taxon>Metazoa</taxon>
        <taxon>Chordata</taxon>
        <taxon>Craniata</taxon>
        <taxon>Vertebrata</taxon>
        <taxon>Euteleostomi</taxon>
        <taxon>Mammalia</taxon>
        <taxon>Metatheria</taxon>
        <taxon>Diprotodontia</taxon>
        <taxon>Macropodidae</taxon>
        <taxon>Notamacropus</taxon>
    </lineage>
</organism>
<feature type="chain" id="PRO_0000185487" description="Lymphotoxin-beta">
    <location>
        <begin position="1"/>
        <end position="250"/>
    </location>
</feature>
<feature type="topological domain" description="Cytoplasmic" evidence="2">
    <location>
        <begin position="1"/>
        <end position="26"/>
    </location>
</feature>
<feature type="transmembrane region" description="Helical; Signal-anchor for type II membrane protein" evidence="2">
    <location>
        <begin position="27"/>
        <end position="47"/>
    </location>
</feature>
<feature type="topological domain" description="Extracellular" evidence="2">
    <location>
        <begin position="48"/>
        <end position="250"/>
    </location>
</feature>
<feature type="domain" description="THD" evidence="3">
    <location>
        <begin position="87"/>
        <end position="249"/>
    </location>
</feature>
<feature type="glycosylation site" description="N-linked (GlcNAc...) asparagine" evidence="2">
    <location>
        <position position="228"/>
    </location>
</feature>
<evidence type="ECO:0000250" key="1"/>
<evidence type="ECO:0000255" key="2"/>
<evidence type="ECO:0000255" key="3">
    <source>
        <dbReference type="PROSITE-ProRule" id="PRU01387"/>
    </source>
</evidence>
<evidence type="ECO:0000305" key="4"/>
<sequence length="250" mass="26143">MGAPGLETRAGGPNGKSYLLLASVGAAVLGTLLLSVPITVLTVLALMPQEQGGQVADPSGPGGQLLQQLGFHKLPVESRSDLSPIPPAAHLIGIAKSSHGLRWVSGYEEAFLKSGTQFLGDEGLLALPQDGIYFLYCHIGYRGRAPSGGEQFRSQAGDPGVPVTLSSQLFRARGASGSGEPELLLQGFETVTPPVQHARGVGQGPLWYATVGFGGLVQLRGGEKIYVNVSHLELVDFRRGKTFFGAVMVG</sequence>
<reference key="1">
    <citation type="journal article" date="1999" name="J. Interferon Cytokine Res.">
        <title>cDNA sequence of the lymphotoxin beta chain from a marsupial, Macropus eugenii (Tammar wallaby).</title>
        <authorList>
            <person name="Harrison G.A."/>
            <person name="Deane E.M."/>
        </authorList>
    </citation>
    <scope>NUCLEOTIDE SEQUENCE [MRNA]</scope>
    <source>
        <tissue>Mammary gland</tissue>
    </source>
</reference>
<accession>Q9XT47</accession>
<gene>
    <name type="primary">LTB</name>
    <name type="synonym">TNFC</name>
    <name type="synonym">TNFSF3</name>
</gene>
<protein>
    <recommendedName>
        <fullName>Lymphotoxin-beta</fullName>
        <shortName>LT-beta</shortName>
    </recommendedName>
    <alternativeName>
        <fullName>Tumor necrosis factor C</fullName>
        <shortName>TNF-C</shortName>
    </alternativeName>
    <alternativeName>
        <fullName>Tumor necrosis factor ligand superfamily member 3</fullName>
    </alternativeName>
</protein>
<keyword id="KW-0202">Cytokine</keyword>
<keyword id="KW-0325">Glycoprotein</keyword>
<keyword id="KW-0472">Membrane</keyword>
<keyword id="KW-0735">Signal-anchor</keyword>
<keyword id="KW-0812">Transmembrane</keyword>
<keyword id="KW-1133">Transmembrane helix</keyword>
<name>TNFC_NOTEU</name>
<proteinExistence type="evidence at transcript level"/>